<accession>A1VK35</accession>
<organism>
    <name type="scientific">Polaromonas naphthalenivorans (strain CJ2)</name>
    <dbReference type="NCBI Taxonomy" id="365044"/>
    <lineage>
        <taxon>Bacteria</taxon>
        <taxon>Pseudomonadati</taxon>
        <taxon>Pseudomonadota</taxon>
        <taxon>Betaproteobacteria</taxon>
        <taxon>Burkholderiales</taxon>
        <taxon>Comamonadaceae</taxon>
        <taxon>Polaromonas</taxon>
    </lineage>
</organism>
<gene>
    <name evidence="1" type="primary">murA</name>
    <name type="ordered locus">Pnap_0694</name>
</gene>
<reference key="1">
    <citation type="journal article" date="2009" name="Environ. Microbiol.">
        <title>The genome of Polaromonas naphthalenivorans strain CJ2, isolated from coal tar-contaminated sediment, reveals physiological and metabolic versatility and evolution through extensive horizontal gene transfer.</title>
        <authorList>
            <person name="Yagi J.M."/>
            <person name="Sims D."/>
            <person name="Brettin T."/>
            <person name="Bruce D."/>
            <person name="Madsen E.L."/>
        </authorList>
    </citation>
    <scope>NUCLEOTIDE SEQUENCE [LARGE SCALE GENOMIC DNA]</scope>
    <source>
        <strain>CJ2</strain>
    </source>
</reference>
<sequence length="424" mass="44921">MDKLRIKGGKSLAGSVDISGAKNAALPELCAALLTAETVTLQNVPGLQDVATMLKLIRNMGVEAERSAHAPGTVILNAGPLSSPEAPYELVKTMRASVLALGPLLARFGEATVSLPGGCAIGSRPVDQHIKGLQAMGADIIVEHGYMLARLPKGQTRLKGAAITTDMVTVTGTENFLMAATLAEGETILENAAQEPEIGDLAEMLIKMGAKIEGHGSRRIRIQGVERLHGCTHQVVADRIETGTFLCAVAAAGGDVVLNHGRADHLEVVIEKLREAGATVTAGEGFIRIQASGRMKAQSFRTTEYPGFPTDMQAQFMALNAIAQGTSTVTETIFENRFMHVNEMVRLGAKIQIEGKVCVINGVEQLSGATVMATDLRASASLVIAGLVASGETFVERIYHLDRGYDQMEAKLRGIGADIERMKA</sequence>
<evidence type="ECO:0000255" key="1">
    <source>
        <dbReference type="HAMAP-Rule" id="MF_00111"/>
    </source>
</evidence>
<name>MURA_POLNA</name>
<protein>
    <recommendedName>
        <fullName evidence="1">UDP-N-acetylglucosamine 1-carboxyvinyltransferase</fullName>
        <ecNumber evidence="1">2.5.1.7</ecNumber>
    </recommendedName>
    <alternativeName>
        <fullName evidence="1">Enoylpyruvate transferase</fullName>
    </alternativeName>
    <alternativeName>
        <fullName evidence="1">UDP-N-acetylglucosamine enolpyruvyl transferase</fullName>
        <shortName evidence="1">EPT</shortName>
    </alternativeName>
</protein>
<keyword id="KW-0131">Cell cycle</keyword>
<keyword id="KW-0132">Cell division</keyword>
<keyword id="KW-0133">Cell shape</keyword>
<keyword id="KW-0961">Cell wall biogenesis/degradation</keyword>
<keyword id="KW-0963">Cytoplasm</keyword>
<keyword id="KW-0573">Peptidoglycan synthesis</keyword>
<keyword id="KW-0670">Pyruvate</keyword>
<keyword id="KW-1185">Reference proteome</keyword>
<keyword id="KW-0808">Transferase</keyword>
<proteinExistence type="inferred from homology"/>
<comment type="function">
    <text evidence="1">Cell wall formation. Adds enolpyruvyl to UDP-N-acetylglucosamine.</text>
</comment>
<comment type="catalytic activity">
    <reaction evidence="1">
        <text>phosphoenolpyruvate + UDP-N-acetyl-alpha-D-glucosamine = UDP-N-acetyl-3-O-(1-carboxyvinyl)-alpha-D-glucosamine + phosphate</text>
        <dbReference type="Rhea" id="RHEA:18681"/>
        <dbReference type="ChEBI" id="CHEBI:43474"/>
        <dbReference type="ChEBI" id="CHEBI:57705"/>
        <dbReference type="ChEBI" id="CHEBI:58702"/>
        <dbReference type="ChEBI" id="CHEBI:68483"/>
        <dbReference type="EC" id="2.5.1.7"/>
    </reaction>
</comment>
<comment type="pathway">
    <text evidence="1">Cell wall biogenesis; peptidoglycan biosynthesis.</text>
</comment>
<comment type="subcellular location">
    <subcellularLocation>
        <location evidence="1">Cytoplasm</location>
    </subcellularLocation>
</comment>
<comment type="similarity">
    <text evidence="1">Belongs to the EPSP synthase family. MurA subfamily.</text>
</comment>
<feature type="chain" id="PRO_1000023064" description="UDP-N-acetylglucosamine 1-carboxyvinyltransferase">
    <location>
        <begin position="1"/>
        <end position="424"/>
    </location>
</feature>
<feature type="active site" description="Proton donor" evidence="1">
    <location>
        <position position="119"/>
    </location>
</feature>
<feature type="binding site" evidence="1">
    <location>
        <begin position="22"/>
        <end position="23"/>
    </location>
    <ligand>
        <name>phosphoenolpyruvate</name>
        <dbReference type="ChEBI" id="CHEBI:58702"/>
    </ligand>
</feature>
<feature type="binding site" evidence="1">
    <location>
        <position position="95"/>
    </location>
    <ligand>
        <name>UDP-N-acetyl-alpha-D-glucosamine</name>
        <dbReference type="ChEBI" id="CHEBI:57705"/>
    </ligand>
</feature>
<feature type="binding site" evidence="1">
    <location>
        <begin position="124"/>
        <end position="128"/>
    </location>
    <ligand>
        <name>UDP-N-acetyl-alpha-D-glucosamine</name>
        <dbReference type="ChEBI" id="CHEBI:57705"/>
    </ligand>
</feature>
<feature type="binding site" evidence="1">
    <location>
        <position position="311"/>
    </location>
    <ligand>
        <name>UDP-N-acetyl-alpha-D-glucosamine</name>
        <dbReference type="ChEBI" id="CHEBI:57705"/>
    </ligand>
</feature>
<feature type="binding site" evidence="1">
    <location>
        <position position="333"/>
    </location>
    <ligand>
        <name>UDP-N-acetyl-alpha-D-glucosamine</name>
        <dbReference type="ChEBI" id="CHEBI:57705"/>
    </ligand>
</feature>
<feature type="modified residue" description="2-(S-cysteinyl)pyruvic acid O-phosphothioketal" evidence="1">
    <location>
        <position position="119"/>
    </location>
</feature>
<dbReference type="EC" id="2.5.1.7" evidence="1"/>
<dbReference type="EMBL" id="CP000529">
    <property type="protein sequence ID" value="ABM36013.1"/>
    <property type="molecule type" value="Genomic_DNA"/>
</dbReference>
<dbReference type="RefSeq" id="WP_011800108.1">
    <property type="nucleotide sequence ID" value="NC_008781.1"/>
</dbReference>
<dbReference type="SMR" id="A1VK35"/>
<dbReference type="STRING" id="365044.Pnap_0694"/>
<dbReference type="KEGG" id="pna:Pnap_0694"/>
<dbReference type="eggNOG" id="COG0766">
    <property type="taxonomic scope" value="Bacteria"/>
</dbReference>
<dbReference type="HOGENOM" id="CLU_027387_0_0_4"/>
<dbReference type="OrthoDB" id="9803760at2"/>
<dbReference type="UniPathway" id="UPA00219"/>
<dbReference type="Proteomes" id="UP000000644">
    <property type="component" value="Chromosome"/>
</dbReference>
<dbReference type="GO" id="GO:0005737">
    <property type="term" value="C:cytoplasm"/>
    <property type="evidence" value="ECO:0007669"/>
    <property type="project" value="UniProtKB-SubCell"/>
</dbReference>
<dbReference type="GO" id="GO:0008760">
    <property type="term" value="F:UDP-N-acetylglucosamine 1-carboxyvinyltransferase activity"/>
    <property type="evidence" value="ECO:0007669"/>
    <property type="project" value="UniProtKB-UniRule"/>
</dbReference>
<dbReference type="GO" id="GO:0051301">
    <property type="term" value="P:cell division"/>
    <property type="evidence" value="ECO:0007669"/>
    <property type="project" value="UniProtKB-KW"/>
</dbReference>
<dbReference type="GO" id="GO:0071555">
    <property type="term" value="P:cell wall organization"/>
    <property type="evidence" value="ECO:0007669"/>
    <property type="project" value="UniProtKB-KW"/>
</dbReference>
<dbReference type="GO" id="GO:0009252">
    <property type="term" value="P:peptidoglycan biosynthetic process"/>
    <property type="evidence" value="ECO:0007669"/>
    <property type="project" value="UniProtKB-UniRule"/>
</dbReference>
<dbReference type="GO" id="GO:0008360">
    <property type="term" value="P:regulation of cell shape"/>
    <property type="evidence" value="ECO:0007669"/>
    <property type="project" value="UniProtKB-KW"/>
</dbReference>
<dbReference type="GO" id="GO:0019277">
    <property type="term" value="P:UDP-N-acetylgalactosamine biosynthetic process"/>
    <property type="evidence" value="ECO:0007669"/>
    <property type="project" value="InterPro"/>
</dbReference>
<dbReference type="CDD" id="cd01555">
    <property type="entry name" value="UdpNAET"/>
    <property type="match status" value="1"/>
</dbReference>
<dbReference type="FunFam" id="3.65.10.10:FF:000001">
    <property type="entry name" value="UDP-N-acetylglucosamine 1-carboxyvinyltransferase"/>
    <property type="match status" value="1"/>
</dbReference>
<dbReference type="Gene3D" id="3.65.10.10">
    <property type="entry name" value="Enolpyruvate transferase domain"/>
    <property type="match status" value="2"/>
</dbReference>
<dbReference type="HAMAP" id="MF_00111">
    <property type="entry name" value="MurA"/>
    <property type="match status" value="1"/>
</dbReference>
<dbReference type="InterPro" id="IPR001986">
    <property type="entry name" value="Enolpyruvate_Tfrase_dom"/>
</dbReference>
<dbReference type="InterPro" id="IPR036968">
    <property type="entry name" value="Enolpyruvate_Tfrase_sf"/>
</dbReference>
<dbReference type="InterPro" id="IPR050068">
    <property type="entry name" value="MurA_subfamily"/>
</dbReference>
<dbReference type="InterPro" id="IPR013792">
    <property type="entry name" value="RNA3'P_cycl/enolpyr_Trfase_a/b"/>
</dbReference>
<dbReference type="InterPro" id="IPR005750">
    <property type="entry name" value="UDP_GlcNAc_COvinyl_MurA"/>
</dbReference>
<dbReference type="NCBIfam" id="TIGR01072">
    <property type="entry name" value="murA"/>
    <property type="match status" value="1"/>
</dbReference>
<dbReference type="NCBIfam" id="NF006873">
    <property type="entry name" value="PRK09369.1"/>
    <property type="match status" value="1"/>
</dbReference>
<dbReference type="PANTHER" id="PTHR43783">
    <property type="entry name" value="UDP-N-ACETYLGLUCOSAMINE 1-CARBOXYVINYLTRANSFERASE"/>
    <property type="match status" value="1"/>
</dbReference>
<dbReference type="PANTHER" id="PTHR43783:SF1">
    <property type="entry name" value="UDP-N-ACETYLGLUCOSAMINE 1-CARBOXYVINYLTRANSFERASE"/>
    <property type="match status" value="1"/>
</dbReference>
<dbReference type="Pfam" id="PF00275">
    <property type="entry name" value="EPSP_synthase"/>
    <property type="match status" value="1"/>
</dbReference>
<dbReference type="SUPFAM" id="SSF55205">
    <property type="entry name" value="EPT/RTPC-like"/>
    <property type="match status" value="1"/>
</dbReference>